<name>RS14Z_FRAAA</name>
<comment type="function">
    <text evidence="1">Binds 16S rRNA, required for the assembly of 30S particles and may also be responsible for determining the conformation of the 16S rRNA at the A site.</text>
</comment>
<comment type="cofactor">
    <cofactor evidence="1">
        <name>Zn(2+)</name>
        <dbReference type="ChEBI" id="CHEBI:29105"/>
    </cofactor>
    <text evidence="1">Binds 1 zinc ion per subunit.</text>
</comment>
<comment type="subunit">
    <text evidence="1">Part of the 30S ribosomal subunit. Contacts proteins S3 and S10.</text>
</comment>
<comment type="similarity">
    <text evidence="1">Belongs to the universal ribosomal protein uS14 family. Zinc-binding uS14 subfamily.</text>
</comment>
<gene>
    <name evidence="1" type="primary">rpsZ</name>
    <name evidence="1" type="synonym">rpsN</name>
    <name type="ordered locus">FRAAL1094</name>
</gene>
<protein>
    <recommendedName>
        <fullName evidence="1">Small ribosomal subunit protein uS14</fullName>
    </recommendedName>
    <alternativeName>
        <fullName evidence="2">30S ribosomal protein S14 type Z</fullName>
    </alternativeName>
</protein>
<organism>
    <name type="scientific">Frankia alni (strain DSM 45986 / CECT 9034 / ACN14a)</name>
    <dbReference type="NCBI Taxonomy" id="326424"/>
    <lineage>
        <taxon>Bacteria</taxon>
        <taxon>Bacillati</taxon>
        <taxon>Actinomycetota</taxon>
        <taxon>Actinomycetes</taxon>
        <taxon>Frankiales</taxon>
        <taxon>Frankiaceae</taxon>
        <taxon>Frankia</taxon>
    </lineage>
</organism>
<feature type="chain" id="PRO_1000067940" description="Small ribosomal subunit protein uS14">
    <location>
        <begin position="1"/>
        <end position="61"/>
    </location>
</feature>
<feature type="binding site" evidence="1">
    <location>
        <position position="24"/>
    </location>
    <ligand>
        <name>Zn(2+)</name>
        <dbReference type="ChEBI" id="CHEBI:29105"/>
    </ligand>
</feature>
<feature type="binding site" evidence="1">
    <location>
        <position position="27"/>
    </location>
    <ligand>
        <name>Zn(2+)</name>
        <dbReference type="ChEBI" id="CHEBI:29105"/>
    </ligand>
</feature>
<feature type="binding site" evidence="1">
    <location>
        <position position="40"/>
    </location>
    <ligand>
        <name>Zn(2+)</name>
        <dbReference type="ChEBI" id="CHEBI:29105"/>
    </ligand>
</feature>
<feature type="binding site" evidence="1">
    <location>
        <position position="43"/>
    </location>
    <ligand>
        <name>Zn(2+)</name>
        <dbReference type="ChEBI" id="CHEBI:29105"/>
    </ligand>
</feature>
<dbReference type="EMBL" id="CT573213">
    <property type="protein sequence ID" value="CAJ59759.1"/>
    <property type="molecule type" value="Genomic_DNA"/>
</dbReference>
<dbReference type="RefSeq" id="WP_011602308.1">
    <property type="nucleotide sequence ID" value="NC_008278.1"/>
</dbReference>
<dbReference type="SMR" id="Q0RRQ8"/>
<dbReference type="STRING" id="326424.FRAAL1094"/>
<dbReference type="KEGG" id="fal:FRAAL1094"/>
<dbReference type="eggNOG" id="COG0199">
    <property type="taxonomic scope" value="Bacteria"/>
</dbReference>
<dbReference type="HOGENOM" id="CLU_139869_3_0_11"/>
<dbReference type="OrthoDB" id="9810484at2"/>
<dbReference type="Proteomes" id="UP000000657">
    <property type="component" value="Chromosome"/>
</dbReference>
<dbReference type="GO" id="GO:0005737">
    <property type="term" value="C:cytoplasm"/>
    <property type="evidence" value="ECO:0007669"/>
    <property type="project" value="UniProtKB-ARBA"/>
</dbReference>
<dbReference type="GO" id="GO:0015935">
    <property type="term" value="C:small ribosomal subunit"/>
    <property type="evidence" value="ECO:0007669"/>
    <property type="project" value="TreeGrafter"/>
</dbReference>
<dbReference type="GO" id="GO:0019843">
    <property type="term" value="F:rRNA binding"/>
    <property type="evidence" value="ECO:0007669"/>
    <property type="project" value="UniProtKB-UniRule"/>
</dbReference>
<dbReference type="GO" id="GO:0003735">
    <property type="term" value="F:structural constituent of ribosome"/>
    <property type="evidence" value="ECO:0007669"/>
    <property type="project" value="InterPro"/>
</dbReference>
<dbReference type="GO" id="GO:0008270">
    <property type="term" value="F:zinc ion binding"/>
    <property type="evidence" value="ECO:0007669"/>
    <property type="project" value="UniProtKB-UniRule"/>
</dbReference>
<dbReference type="GO" id="GO:0006412">
    <property type="term" value="P:translation"/>
    <property type="evidence" value="ECO:0007669"/>
    <property type="project" value="UniProtKB-UniRule"/>
</dbReference>
<dbReference type="FunFam" id="4.10.830.10:FF:000001">
    <property type="entry name" value="30S ribosomal protein S14 type Z"/>
    <property type="match status" value="1"/>
</dbReference>
<dbReference type="Gene3D" id="4.10.830.10">
    <property type="entry name" value="30s Ribosomal Protein S14, Chain N"/>
    <property type="match status" value="1"/>
</dbReference>
<dbReference type="HAMAP" id="MF_01364_B">
    <property type="entry name" value="Ribosomal_uS14_2_B"/>
    <property type="match status" value="1"/>
</dbReference>
<dbReference type="InterPro" id="IPR001209">
    <property type="entry name" value="Ribosomal_uS14"/>
</dbReference>
<dbReference type="InterPro" id="IPR023053">
    <property type="entry name" value="Ribosomal_uS14_bact"/>
</dbReference>
<dbReference type="InterPro" id="IPR018271">
    <property type="entry name" value="Ribosomal_uS14_CS"/>
</dbReference>
<dbReference type="InterPro" id="IPR043140">
    <property type="entry name" value="Ribosomal_uS14_sf"/>
</dbReference>
<dbReference type="NCBIfam" id="NF005974">
    <property type="entry name" value="PRK08061.1"/>
    <property type="match status" value="1"/>
</dbReference>
<dbReference type="PANTHER" id="PTHR19836">
    <property type="entry name" value="30S RIBOSOMAL PROTEIN S14"/>
    <property type="match status" value="1"/>
</dbReference>
<dbReference type="PANTHER" id="PTHR19836:SF19">
    <property type="entry name" value="SMALL RIBOSOMAL SUBUNIT PROTEIN US14M"/>
    <property type="match status" value="1"/>
</dbReference>
<dbReference type="Pfam" id="PF00253">
    <property type="entry name" value="Ribosomal_S14"/>
    <property type="match status" value="1"/>
</dbReference>
<dbReference type="SUPFAM" id="SSF57716">
    <property type="entry name" value="Glucocorticoid receptor-like (DNA-binding domain)"/>
    <property type="match status" value="1"/>
</dbReference>
<dbReference type="PROSITE" id="PS00527">
    <property type="entry name" value="RIBOSOMAL_S14"/>
    <property type="match status" value="1"/>
</dbReference>
<reference key="1">
    <citation type="journal article" date="2007" name="Genome Res.">
        <title>Genome characteristics of facultatively symbiotic Frankia sp. strains reflect host range and host plant biogeography.</title>
        <authorList>
            <person name="Normand P."/>
            <person name="Lapierre P."/>
            <person name="Tisa L.S."/>
            <person name="Gogarten J.P."/>
            <person name="Alloisio N."/>
            <person name="Bagnarol E."/>
            <person name="Bassi C.A."/>
            <person name="Berry A.M."/>
            <person name="Bickhart D.M."/>
            <person name="Choisne N."/>
            <person name="Couloux A."/>
            <person name="Cournoyer B."/>
            <person name="Cruveiller S."/>
            <person name="Daubin V."/>
            <person name="Demange N."/>
            <person name="Francino M.P."/>
            <person name="Goltsman E."/>
            <person name="Huang Y."/>
            <person name="Kopp O.R."/>
            <person name="Labarre L."/>
            <person name="Lapidus A."/>
            <person name="Lavire C."/>
            <person name="Marechal J."/>
            <person name="Martinez M."/>
            <person name="Mastronunzio J.E."/>
            <person name="Mullin B.C."/>
            <person name="Niemann J."/>
            <person name="Pujic P."/>
            <person name="Rawnsley T."/>
            <person name="Rouy Z."/>
            <person name="Schenowitz C."/>
            <person name="Sellstedt A."/>
            <person name="Tavares F."/>
            <person name="Tomkins J.P."/>
            <person name="Vallenet D."/>
            <person name="Valverde C."/>
            <person name="Wall L.G."/>
            <person name="Wang Y."/>
            <person name="Medigue C."/>
            <person name="Benson D.R."/>
        </authorList>
    </citation>
    <scope>NUCLEOTIDE SEQUENCE [LARGE SCALE GENOMIC DNA]</scope>
    <source>
        <strain>DSM 45986 / CECT 9034 / ACN14a</strain>
    </source>
</reference>
<accession>Q0RRQ8</accession>
<sequence>MAKKALIEKSNRKPKYAVRGYTRCQRCGRSRSVYRVFGLCRVCLRQMAHRGELPGITKSSW</sequence>
<proteinExistence type="inferred from homology"/>
<keyword id="KW-0479">Metal-binding</keyword>
<keyword id="KW-1185">Reference proteome</keyword>
<keyword id="KW-0687">Ribonucleoprotein</keyword>
<keyword id="KW-0689">Ribosomal protein</keyword>
<keyword id="KW-0694">RNA-binding</keyword>
<keyword id="KW-0699">rRNA-binding</keyword>
<keyword id="KW-0862">Zinc</keyword>
<evidence type="ECO:0000255" key="1">
    <source>
        <dbReference type="HAMAP-Rule" id="MF_01364"/>
    </source>
</evidence>
<evidence type="ECO:0000305" key="2"/>